<protein>
    <recommendedName>
        <fullName evidence="1">Small ribosomal subunit protein uS15</fullName>
    </recommendedName>
    <alternativeName>
        <fullName evidence="3">30S ribosomal protein S15</fullName>
    </alternativeName>
</protein>
<feature type="chain" id="PRO_0000354197" description="Small ribosomal subunit protein uS15">
    <location>
        <begin position="1"/>
        <end position="89"/>
    </location>
</feature>
<feature type="region of interest" description="Disordered" evidence="2">
    <location>
        <begin position="1"/>
        <end position="23"/>
    </location>
</feature>
<feature type="compositionally biased region" description="Basic and acidic residues" evidence="2">
    <location>
        <begin position="1"/>
        <end position="21"/>
    </location>
</feature>
<sequence length="89" mass="10544">MALSPEKKNEIIENFKTHEGDTGSPEVQIALLTERINQLTMHLKSFKKDHHSRRGLLKMVGQRRALLNYLRDRNFDRYRTILEKLGLRK</sequence>
<comment type="function">
    <text evidence="1">One of the primary rRNA binding proteins, it binds directly to 16S rRNA where it helps nucleate assembly of the platform of the 30S subunit by binding and bridging several RNA helices of the 16S rRNA.</text>
</comment>
<comment type="function">
    <text evidence="1">Forms an intersubunit bridge (bridge B4) with the 23S rRNA of the 50S subunit in the ribosome.</text>
</comment>
<comment type="subunit">
    <text evidence="1">Part of the 30S ribosomal subunit. Forms a bridge to the 50S subunit in the 70S ribosome, contacting the 23S rRNA.</text>
</comment>
<comment type="similarity">
    <text evidence="1">Belongs to the universal ribosomal protein uS15 family.</text>
</comment>
<evidence type="ECO:0000255" key="1">
    <source>
        <dbReference type="HAMAP-Rule" id="MF_01343"/>
    </source>
</evidence>
<evidence type="ECO:0000256" key="2">
    <source>
        <dbReference type="SAM" id="MobiDB-lite"/>
    </source>
</evidence>
<evidence type="ECO:0000305" key="3"/>
<dbReference type="EMBL" id="CP000612">
    <property type="protein sequence ID" value="ABO50470.1"/>
    <property type="molecule type" value="Genomic_DNA"/>
</dbReference>
<dbReference type="RefSeq" id="WP_011878280.1">
    <property type="nucleotide sequence ID" value="NC_009253.1"/>
</dbReference>
<dbReference type="SMR" id="A4J5W7"/>
<dbReference type="STRING" id="349161.Dred_1951"/>
<dbReference type="KEGG" id="drm:Dred_1951"/>
<dbReference type="eggNOG" id="COG0184">
    <property type="taxonomic scope" value="Bacteria"/>
</dbReference>
<dbReference type="HOGENOM" id="CLU_148518_0_0_9"/>
<dbReference type="OrthoDB" id="9799262at2"/>
<dbReference type="Proteomes" id="UP000001556">
    <property type="component" value="Chromosome"/>
</dbReference>
<dbReference type="GO" id="GO:0022627">
    <property type="term" value="C:cytosolic small ribosomal subunit"/>
    <property type="evidence" value="ECO:0007669"/>
    <property type="project" value="TreeGrafter"/>
</dbReference>
<dbReference type="GO" id="GO:0019843">
    <property type="term" value="F:rRNA binding"/>
    <property type="evidence" value="ECO:0007669"/>
    <property type="project" value="UniProtKB-UniRule"/>
</dbReference>
<dbReference type="GO" id="GO:0003735">
    <property type="term" value="F:structural constituent of ribosome"/>
    <property type="evidence" value="ECO:0007669"/>
    <property type="project" value="InterPro"/>
</dbReference>
<dbReference type="GO" id="GO:0006412">
    <property type="term" value="P:translation"/>
    <property type="evidence" value="ECO:0007669"/>
    <property type="project" value="UniProtKB-UniRule"/>
</dbReference>
<dbReference type="CDD" id="cd00353">
    <property type="entry name" value="Ribosomal_S15p_S13e"/>
    <property type="match status" value="1"/>
</dbReference>
<dbReference type="FunFam" id="1.10.287.10:FF:000002">
    <property type="entry name" value="30S ribosomal protein S15"/>
    <property type="match status" value="1"/>
</dbReference>
<dbReference type="Gene3D" id="6.10.250.3130">
    <property type="match status" value="1"/>
</dbReference>
<dbReference type="Gene3D" id="1.10.287.10">
    <property type="entry name" value="S15/NS1, RNA-binding"/>
    <property type="match status" value="1"/>
</dbReference>
<dbReference type="HAMAP" id="MF_01343_B">
    <property type="entry name" value="Ribosomal_uS15_B"/>
    <property type="match status" value="1"/>
</dbReference>
<dbReference type="InterPro" id="IPR000589">
    <property type="entry name" value="Ribosomal_uS15"/>
</dbReference>
<dbReference type="InterPro" id="IPR005290">
    <property type="entry name" value="Ribosomal_uS15_bac-type"/>
</dbReference>
<dbReference type="InterPro" id="IPR009068">
    <property type="entry name" value="uS15_NS1_RNA-bd_sf"/>
</dbReference>
<dbReference type="NCBIfam" id="TIGR00952">
    <property type="entry name" value="S15_bact"/>
    <property type="match status" value="1"/>
</dbReference>
<dbReference type="PANTHER" id="PTHR23321">
    <property type="entry name" value="RIBOSOMAL PROTEIN S15, BACTERIAL AND ORGANELLAR"/>
    <property type="match status" value="1"/>
</dbReference>
<dbReference type="PANTHER" id="PTHR23321:SF26">
    <property type="entry name" value="SMALL RIBOSOMAL SUBUNIT PROTEIN US15M"/>
    <property type="match status" value="1"/>
</dbReference>
<dbReference type="Pfam" id="PF00312">
    <property type="entry name" value="Ribosomal_S15"/>
    <property type="match status" value="1"/>
</dbReference>
<dbReference type="SMART" id="SM01387">
    <property type="entry name" value="Ribosomal_S15"/>
    <property type="match status" value="1"/>
</dbReference>
<dbReference type="SUPFAM" id="SSF47060">
    <property type="entry name" value="S15/NS1 RNA-binding domain"/>
    <property type="match status" value="1"/>
</dbReference>
<dbReference type="PROSITE" id="PS00362">
    <property type="entry name" value="RIBOSOMAL_S15"/>
    <property type="match status" value="1"/>
</dbReference>
<keyword id="KW-1185">Reference proteome</keyword>
<keyword id="KW-0687">Ribonucleoprotein</keyword>
<keyword id="KW-0689">Ribosomal protein</keyword>
<keyword id="KW-0694">RNA-binding</keyword>
<keyword id="KW-0699">rRNA-binding</keyword>
<gene>
    <name evidence="1" type="primary">rpsO</name>
    <name type="ordered locus">Dred_1951</name>
</gene>
<organism>
    <name type="scientific">Desulforamulus reducens (strain ATCC BAA-1160 / DSM 100696 / MI-1)</name>
    <name type="common">Desulfotomaculum reducens</name>
    <dbReference type="NCBI Taxonomy" id="349161"/>
    <lineage>
        <taxon>Bacteria</taxon>
        <taxon>Bacillati</taxon>
        <taxon>Bacillota</taxon>
        <taxon>Clostridia</taxon>
        <taxon>Eubacteriales</taxon>
        <taxon>Peptococcaceae</taxon>
        <taxon>Desulforamulus</taxon>
    </lineage>
</organism>
<reference key="1">
    <citation type="submission" date="2007-03" db="EMBL/GenBank/DDBJ databases">
        <title>Complete sequence of Desulfotomaculum reducens MI-1.</title>
        <authorList>
            <consortium name="US DOE Joint Genome Institute"/>
            <person name="Copeland A."/>
            <person name="Lucas S."/>
            <person name="Lapidus A."/>
            <person name="Barry K."/>
            <person name="Detter J.C."/>
            <person name="Glavina del Rio T."/>
            <person name="Hammon N."/>
            <person name="Israni S."/>
            <person name="Dalin E."/>
            <person name="Tice H."/>
            <person name="Pitluck S."/>
            <person name="Sims D."/>
            <person name="Brettin T."/>
            <person name="Bruce D."/>
            <person name="Han C."/>
            <person name="Tapia R."/>
            <person name="Schmutz J."/>
            <person name="Larimer F."/>
            <person name="Land M."/>
            <person name="Hauser L."/>
            <person name="Kyrpides N."/>
            <person name="Kim E."/>
            <person name="Tebo B.M."/>
            <person name="Richardson P."/>
        </authorList>
    </citation>
    <scope>NUCLEOTIDE SEQUENCE [LARGE SCALE GENOMIC DNA]</scope>
    <source>
        <strain>ATCC BAA-1160 / DSM 100696 / MI-1</strain>
    </source>
</reference>
<accession>A4J5W7</accession>
<proteinExistence type="inferred from homology"/>
<name>RS15_DESRM</name>